<evidence type="ECO:0000250" key="1">
    <source>
        <dbReference type="UniProtKB" id="P92964"/>
    </source>
</evidence>
<evidence type="ECO:0000250" key="2">
    <source>
        <dbReference type="UniProtKB" id="P92965"/>
    </source>
</evidence>
<evidence type="ECO:0000250" key="3">
    <source>
        <dbReference type="UniProtKB" id="Q9FYB7"/>
    </source>
</evidence>
<evidence type="ECO:0000250" key="4">
    <source>
        <dbReference type="UniProtKB" id="Q9SJA6"/>
    </source>
</evidence>
<evidence type="ECO:0000255" key="5">
    <source>
        <dbReference type="PROSITE-ProRule" id="PRU00176"/>
    </source>
</evidence>
<evidence type="ECO:0000256" key="6">
    <source>
        <dbReference type="SAM" id="MobiDB-lite"/>
    </source>
</evidence>
<evidence type="ECO:0000269" key="7">
    <source>
    </source>
</evidence>
<evidence type="ECO:0000269" key="8">
    <source>
    </source>
</evidence>
<evidence type="ECO:0000303" key="9">
    <source>
    </source>
</evidence>
<evidence type="ECO:0000305" key="10"/>
<evidence type="ECO:0000305" key="11">
    <source>
    </source>
</evidence>
<evidence type="ECO:0000305" key="12">
    <source>
    </source>
</evidence>
<evidence type="ECO:0007744" key="13">
    <source>
    </source>
</evidence>
<evidence type="ECO:0007744" key="14">
    <source>
    </source>
</evidence>
<reference key="1">
    <citation type="journal article" date="1996" name="Plant Cell">
        <title>Characterization of a novel arginine/serine-rich splicing factor in Arabidopsis.</title>
        <authorList>
            <person name="Lopato S."/>
            <person name="Waigmann E."/>
            <person name="Barta A."/>
        </authorList>
    </citation>
    <scope>NUCLEOTIDE SEQUENCE [MRNA] (ISOFORM 1)</scope>
    <source>
        <strain>cv. Columbia</strain>
    </source>
</reference>
<reference key="2">
    <citation type="journal article" date="1998" name="DNA Res.">
        <title>Structural analysis of Arabidopsis thaliana chromosome 5. VII. Sequence features of the regions of 1,013,767 bp covered by sixteen physically assigned P1 and TAC clones.</title>
        <authorList>
            <person name="Nakamura Y."/>
            <person name="Sato S."/>
            <person name="Asamizu E."/>
            <person name="Kaneko T."/>
            <person name="Kotani H."/>
            <person name="Miyajima N."/>
            <person name="Tabata S."/>
        </authorList>
    </citation>
    <scope>NUCLEOTIDE SEQUENCE [LARGE SCALE GENOMIC DNA]</scope>
    <source>
        <strain>cv. Columbia</strain>
    </source>
</reference>
<reference key="3">
    <citation type="journal article" date="2017" name="Plant J.">
        <title>Araport11: a complete reannotation of the Arabidopsis thaliana reference genome.</title>
        <authorList>
            <person name="Cheng C.Y."/>
            <person name="Krishnakumar V."/>
            <person name="Chan A.P."/>
            <person name="Thibaud-Nissen F."/>
            <person name="Schobel S."/>
            <person name="Town C.D."/>
        </authorList>
    </citation>
    <scope>GENOME REANNOTATION</scope>
    <source>
        <strain>cv. Columbia</strain>
    </source>
</reference>
<reference key="4">
    <citation type="journal article" date="2003" name="Science">
        <title>Empirical analysis of transcriptional activity in the Arabidopsis genome.</title>
        <authorList>
            <person name="Yamada K."/>
            <person name="Lim J."/>
            <person name="Dale J.M."/>
            <person name="Chen H."/>
            <person name="Shinn P."/>
            <person name="Palm C.J."/>
            <person name="Southwick A.M."/>
            <person name="Wu H.C."/>
            <person name="Kim C.J."/>
            <person name="Nguyen M."/>
            <person name="Pham P.K."/>
            <person name="Cheuk R.F."/>
            <person name="Karlin-Newmann G."/>
            <person name="Liu S.X."/>
            <person name="Lam B."/>
            <person name="Sakano H."/>
            <person name="Wu T."/>
            <person name="Yu G."/>
            <person name="Miranda M."/>
            <person name="Quach H.L."/>
            <person name="Tripp M."/>
            <person name="Chang C.H."/>
            <person name="Lee J.M."/>
            <person name="Toriumi M.J."/>
            <person name="Chan M.M."/>
            <person name="Tang C.C."/>
            <person name="Onodera C.S."/>
            <person name="Deng J.M."/>
            <person name="Akiyama K."/>
            <person name="Ansari Y."/>
            <person name="Arakawa T."/>
            <person name="Banh J."/>
            <person name="Banno F."/>
            <person name="Bowser L."/>
            <person name="Brooks S.Y."/>
            <person name="Carninci P."/>
            <person name="Chao Q."/>
            <person name="Choy N."/>
            <person name="Enju A."/>
            <person name="Goldsmith A.D."/>
            <person name="Gurjal M."/>
            <person name="Hansen N.F."/>
            <person name="Hayashizaki Y."/>
            <person name="Johnson-Hopson C."/>
            <person name="Hsuan V.W."/>
            <person name="Iida K."/>
            <person name="Karnes M."/>
            <person name="Khan S."/>
            <person name="Koesema E."/>
            <person name="Ishida J."/>
            <person name="Jiang P.X."/>
            <person name="Jones T."/>
            <person name="Kawai J."/>
            <person name="Kamiya A."/>
            <person name="Meyers C."/>
            <person name="Nakajima M."/>
            <person name="Narusaka M."/>
            <person name="Seki M."/>
            <person name="Sakurai T."/>
            <person name="Satou M."/>
            <person name="Tamse R."/>
            <person name="Vaysberg M."/>
            <person name="Wallender E.K."/>
            <person name="Wong C."/>
            <person name="Yamamura Y."/>
            <person name="Yuan S."/>
            <person name="Shinozaki K."/>
            <person name="Davis R.W."/>
            <person name="Theologis A."/>
            <person name="Ecker J.R."/>
        </authorList>
    </citation>
    <scope>NUCLEOTIDE SEQUENCE [LARGE SCALE MRNA] (ISOFORM 1)</scope>
    <source>
        <strain>cv. Columbia</strain>
    </source>
</reference>
<reference key="5">
    <citation type="journal article" date="2009" name="DNA Res.">
        <title>Analysis of multiple occurrences of alternative splicing events in Arabidopsis thaliana using novel sequenced full-length cDNAs.</title>
        <authorList>
            <person name="Iida K."/>
            <person name="Fukami-Kobayashi K."/>
            <person name="Toyoda A."/>
            <person name="Sakaki Y."/>
            <person name="Kobayashi M."/>
            <person name="Seki M."/>
            <person name="Shinozaki K."/>
        </authorList>
    </citation>
    <scope>NUCLEOTIDE SEQUENCE [LARGE SCALE MRNA] (ISOFORM 3)</scope>
    <source>
        <strain>cv. Columbia</strain>
        <tissue>Rosette leaf</tissue>
    </source>
</reference>
<reference key="6">
    <citation type="journal article" date="2006" name="Mol. Biol. Evol.">
        <title>Survey of conserved alternative splicing events of mRNAs encoding SR proteins in land plants.</title>
        <authorList>
            <person name="Iida K."/>
            <person name="Go M."/>
        </authorList>
    </citation>
    <scope>ALTERNATIVE SPLICING</scope>
</reference>
<reference key="7">
    <citation type="journal article" date="2006" name="Nucleic Acids Res.">
        <title>Phosphoproteomics reveals extensive in vivo phosphorylation of Arabidopsis proteins involved in RNA metabolism.</title>
        <authorList>
            <person name="de la Fuente van Bentem S."/>
            <person name="Anrather D."/>
            <person name="Roitinger E."/>
            <person name="Djamei A."/>
            <person name="Hufnagl T."/>
            <person name="Barta A."/>
            <person name="Csaszar E."/>
            <person name="Dohnal I."/>
            <person name="Lecourieux D."/>
            <person name="Hirt H."/>
        </authorList>
    </citation>
    <scope>PHOSPHORYLATION [LARGE SCALE ANALYSIS] AT SER-239; SER-324; SER-342; SER-347 AND SER-351</scope>
    <scope>IDENTIFICATION BY MASS SPECTROMETRY [LARGE SCALE ANALYSIS]</scope>
</reference>
<reference key="8">
    <citation type="journal article" date="2007" name="Plant J.">
        <title>Alternative splicing of pre-mRNAs of Arabidopsis serine/arginine-rich proteins: regulation by hormones and stresses.</title>
        <authorList>
            <person name="Palusa S.G."/>
            <person name="Ali G.S."/>
            <person name="Reddy A.S."/>
        </authorList>
    </citation>
    <scope>ALTERNATIVE SPLICING</scope>
    <scope>INDUCTION</scope>
</reference>
<reference key="9">
    <citation type="journal article" date="2009" name="Plant Physiol.">
        <title>Large-scale Arabidopsis phosphoproteome profiling reveals novel chloroplast kinase substrates and phosphorylation networks.</title>
        <authorList>
            <person name="Reiland S."/>
            <person name="Messerli G."/>
            <person name="Baerenfaller K."/>
            <person name="Gerrits B."/>
            <person name="Endler A."/>
            <person name="Grossmann J."/>
            <person name="Gruissem W."/>
            <person name="Baginsky S."/>
        </authorList>
    </citation>
    <scope>PHOSPHORYLATION [LARGE SCALE ANALYSIS] AT SER-239 AND SER-254</scope>
    <scope>IDENTIFICATION BY MASS SPECTROMETRY [LARGE SCALE ANALYSIS]</scope>
</reference>
<reference key="10">
    <citation type="journal article" date="2010" name="Plant Cell">
        <title>Implementing a rational and consistent nomenclature for serine/arginine-rich protein splicing factors (SR proteins) in plants.</title>
        <authorList>
            <person name="Barta A."/>
            <person name="Kalyna M."/>
            <person name="Reddy A.S."/>
        </authorList>
    </citation>
    <scope>GENE FAMILY</scope>
    <scope>NOMENCLATURE</scope>
</reference>
<reference key="11">
    <citation type="journal article" date="2011" name="PLoS ONE">
        <title>Comparative analysis of serine/arginine-rich proteins across 27 eukaryotes: insights into sub-family classification and extent of alternative splicing.</title>
        <authorList>
            <person name="Richardson D.N."/>
            <person name="Rogers M.F."/>
            <person name="Labadorf A."/>
            <person name="Ben-Hur A."/>
            <person name="Guo H."/>
            <person name="Paterson A.H."/>
            <person name="Reddy A.S.N."/>
        </authorList>
    </citation>
    <scope>GENE FAMILY</scope>
</reference>
<reference key="12">
    <citation type="journal article" date="2013" name="PLoS Genet.">
        <title>A KH-domain RNA-binding protein interacts with FIERY2/CTD phosphatase-like 1 and splicing factors and is important for pre-mRNA splicing in Arabidopsis.</title>
        <authorList>
            <person name="Chen T."/>
            <person name="Cui P."/>
            <person name="Chen H."/>
            <person name="Ali S."/>
            <person name="Zhang S."/>
            <person name="Xiong L."/>
        </authorList>
    </citation>
    <scope>FUNCTION</scope>
    <scope>IDENTIFICATION BY MASS SPECTROMETRY</scope>
    <scope>INTERACTION WITH RCF3 AND CPL1</scope>
    <scope>SUBCELLULAR LOCATION</scope>
    <scope>DISRUPTION PHENOTYPE</scope>
</reference>
<reference key="13">
    <citation type="journal article" date="2015" name="Nucleic Acids Res.">
        <title>The RNA-binding protein HOS5 and serine/arginine-rich proteins RS40 and RS41 participate in miRNA biogenesis in Arabidopsis.</title>
        <authorList>
            <person name="Chen T."/>
            <person name="Cui P."/>
            <person name="Xiong L."/>
        </authorList>
    </citation>
    <scope>FUNCTION</scope>
    <scope>INTERACTION WITH DRB1/HYL1 AND SE</scope>
    <scope>SUBCELLULAR LOCATION</scope>
</reference>
<keyword id="KW-0025">Alternative splicing</keyword>
<keyword id="KW-0507">mRNA processing</keyword>
<keyword id="KW-0508">mRNA splicing</keyword>
<keyword id="KW-0539">Nucleus</keyword>
<keyword id="KW-0597">Phosphoprotein</keyword>
<keyword id="KW-1185">Reference proteome</keyword>
<keyword id="KW-0677">Repeat</keyword>
<keyword id="KW-0694">RNA-binding</keyword>
<keyword id="KW-0747">Spliceosome</keyword>
<accession>P92966</accession>
<accession>C0Z344</accession>
<accession>F4KES0</accession>
<accession>F4KES2</accession>
<accession>F4KES3</accession>
<accession>Q9FJ88</accession>
<sequence length="356" mass="41282">MKPVFCGNFEYDARESDLERLFRKYGKVERVDMKAGFAFVYMEDERDAEDAIRALDRFEYGRTGRRLRVEWTKNDRGGAGRSGGSRRSSSGLRPSKTLFVINFDAQNTRTRDLERHFEPYGKIVNVRIRRNFAFIQYEAQEDATRALDATNSSKLMDKVISVEYAVKDDDSRGNGYSPERRRDRSPDRRRRSPSPYRRERGSPDYGRGASPVAHKRERTSPDYGRGRRSPSPYKRARLSPDYKRDDRRRERVASPENGAVRNRSPRKGRGESRSPPPYEKRRESRSPPPYEKRRESRSPPPYEKRRERSRSRSKSSPENGQVESPGQIMEVEAGRGYDGADSPIRESPSRSPPAEE</sequence>
<proteinExistence type="evidence at protein level"/>
<organism>
    <name type="scientific">Arabidopsis thaliana</name>
    <name type="common">Mouse-ear cress</name>
    <dbReference type="NCBI Taxonomy" id="3702"/>
    <lineage>
        <taxon>Eukaryota</taxon>
        <taxon>Viridiplantae</taxon>
        <taxon>Streptophyta</taxon>
        <taxon>Embryophyta</taxon>
        <taxon>Tracheophyta</taxon>
        <taxon>Spermatophyta</taxon>
        <taxon>Magnoliopsida</taxon>
        <taxon>eudicotyledons</taxon>
        <taxon>Gunneridae</taxon>
        <taxon>Pentapetalae</taxon>
        <taxon>rosids</taxon>
        <taxon>malvids</taxon>
        <taxon>Brassicales</taxon>
        <taxon>Brassicaceae</taxon>
        <taxon>Camelineae</taxon>
        <taxon>Arabidopsis</taxon>
    </lineage>
</organism>
<name>SRS41_ARATH</name>
<gene>
    <name type="primary">RS41</name>
    <name type="synonym">RSP41</name>
    <name type="ordered locus">At5g52040</name>
    <name type="ORF">MSG15.12</name>
</gene>
<feature type="chain" id="PRO_0000081879" description="Serine/arginine-rich splicing factor RS41">
    <location>
        <begin position="1"/>
        <end position="356"/>
    </location>
</feature>
<feature type="domain" description="RRM 1" evidence="5">
    <location>
        <begin position="2"/>
        <end position="74"/>
    </location>
</feature>
<feature type="domain" description="RRM 2" evidence="5">
    <location>
        <begin position="96"/>
        <end position="167"/>
    </location>
</feature>
<feature type="repeat" description="1">
    <location>
        <begin position="267"/>
        <end position="278"/>
    </location>
</feature>
<feature type="repeat" description="2">
    <location>
        <begin position="279"/>
        <end position="290"/>
    </location>
</feature>
<feature type="repeat" description="3">
    <location>
        <begin position="291"/>
        <end position="302"/>
    </location>
</feature>
<feature type="repeat" description="4; truncated">
    <location>
        <begin position="303"/>
        <end position="307"/>
    </location>
</feature>
<feature type="region of interest" description="Disordered" evidence="6">
    <location>
        <begin position="73"/>
        <end position="92"/>
    </location>
</feature>
<feature type="region of interest" description="Disordered" evidence="6">
    <location>
        <begin position="168"/>
        <end position="356"/>
    </location>
</feature>
<feature type="region of interest" description="4 X 12 AA tandem repeats of [KE]-[GK]-R -[GR]-E-S-R-S-P-P-P-Y">
    <location>
        <begin position="267"/>
        <end position="307"/>
    </location>
</feature>
<feature type="compositionally biased region" description="Basic and acidic residues" evidence="6">
    <location>
        <begin position="168"/>
        <end position="186"/>
    </location>
</feature>
<feature type="compositionally biased region" description="Basic and acidic residues" evidence="6">
    <location>
        <begin position="238"/>
        <end position="253"/>
    </location>
</feature>
<feature type="compositionally biased region" description="Basic and acidic residues" evidence="6">
    <location>
        <begin position="268"/>
        <end position="306"/>
    </location>
</feature>
<feature type="modified residue" description="Phosphoserine" evidence="1">
    <location>
        <position position="192"/>
    </location>
</feature>
<feature type="modified residue" description="Phosphoserine" evidence="1">
    <location>
        <position position="194"/>
    </location>
</feature>
<feature type="modified residue" description="Phosphoserine" evidence="2">
    <location>
        <position position="210"/>
    </location>
</feature>
<feature type="modified residue" description="Phosphoserine" evidence="13 14">
    <location>
        <position position="239"/>
    </location>
</feature>
<feature type="modified residue" description="Phosphoserine" evidence="14">
    <location>
        <position position="254"/>
    </location>
</feature>
<feature type="modified residue" description="Phosphoserine" evidence="4">
    <location>
        <position position="274"/>
    </location>
</feature>
<feature type="modified residue" description="Phosphoserine" evidence="3">
    <location>
        <position position="309"/>
    </location>
</feature>
<feature type="modified residue" description="Phosphoserine" evidence="13">
    <location>
        <position position="324"/>
    </location>
</feature>
<feature type="modified residue" description="Phosphoserine" evidence="13">
    <location>
        <position position="342"/>
    </location>
</feature>
<feature type="modified residue" description="Phosphoserine" evidence="13">
    <location>
        <position position="347"/>
    </location>
</feature>
<feature type="modified residue" description="Phosphoserine" evidence="13">
    <location>
        <position position="351"/>
    </location>
</feature>
<feature type="splice variant" id="VSP_054981" description="In isoform 5." evidence="10">
    <original>MKPVFCGNFEYDARESDLERLFRKYGKVERVDMKAG</original>
    <variation>MEFAPPRFW</variation>
    <location>
        <begin position="1"/>
        <end position="36"/>
    </location>
</feature>
<feature type="splice variant" id="VSP_054982" description="In isoform 3 and isoform 4." evidence="9">
    <original>MKPVFCGNFEYDARESDLERLFRKYGKVERVDMKA</original>
    <variation>MQ</variation>
    <location>
        <begin position="1"/>
        <end position="35"/>
    </location>
</feature>
<feature type="splice variant" id="VSP_054983" description="In isoform 2 and isoform 4." evidence="10">
    <original>E</original>
    <variation>ES</variation>
    <location>
        <position position="346"/>
    </location>
</feature>
<feature type="sequence conflict" description="In Ref. 1; CAA67799." evidence="10" ref="1">
    <original>F</original>
    <variation>Y</variation>
    <location>
        <position position="132"/>
    </location>
</feature>
<protein>
    <recommendedName>
        <fullName>Serine/arginine-rich splicing factor RS41</fullName>
        <shortName>At-RSp41</shortName>
        <shortName>AtRS41</shortName>
    </recommendedName>
</protein>
<dbReference type="EMBL" id="X99436">
    <property type="protein sequence ID" value="CAA67799.1"/>
    <property type="molecule type" value="mRNA"/>
</dbReference>
<dbReference type="EMBL" id="AB015478">
    <property type="protein sequence ID" value="BAB11052.1"/>
    <property type="molecule type" value="Genomic_DNA"/>
</dbReference>
<dbReference type="EMBL" id="CP002688">
    <property type="protein sequence ID" value="AED96162.1"/>
    <property type="molecule type" value="Genomic_DNA"/>
</dbReference>
<dbReference type="EMBL" id="CP002688">
    <property type="protein sequence ID" value="AED96163.1"/>
    <property type="molecule type" value="Genomic_DNA"/>
</dbReference>
<dbReference type="EMBL" id="CP002688">
    <property type="protein sequence ID" value="AED96164.1"/>
    <property type="molecule type" value="Genomic_DNA"/>
</dbReference>
<dbReference type="EMBL" id="CP002688">
    <property type="protein sequence ID" value="AED96165.1"/>
    <property type="molecule type" value="Genomic_DNA"/>
</dbReference>
<dbReference type="EMBL" id="CP002688">
    <property type="protein sequence ID" value="ANM68613.1"/>
    <property type="molecule type" value="Genomic_DNA"/>
</dbReference>
<dbReference type="EMBL" id="AY059133">
    <property type="protein sequence ID" value="AAL15239.1"/>
    <property type="molecule type" value="mRNA"/>
</dbReference>
<dbReference type="EMBL" id="AF370171">
    <property type="protein sequence ID" value="AAK43986.1"/>
    <property type="molecule type" value="mRNA"/>
</dbReference>
<dbReference type="EMBL" id="AK319008">
    <property type="protein sequence ID" value="BAH57123.1"/>
    <property type="molecule type" value="mRNA"/>
</dbReference>
<dbReference type="RefSeq" id="NP_001154773.1">
    <molecule id="P92966-5"/>
    <property type="nucleotide sequence ID" value="NM_001161301.1"/>
</dbReference>
<dbReference type="RefSeq" id="NP_001154774.1">
    <molecule id="P92966-4"/>
    <property type="nucleotide sequence ID" value="NM_001161302.1"/>
</dbReference>
<dbReference type="RefSeq" id="NP_001330349.1">
    <molecule id="P92966-3"/>
    <property type="nucleotide sequence ID" value="NM_001344975.1"/>
</dbReference>
<dbReference type="RefSeq" id="NP_200017.2">
    <molecule id="P92966-2"/>
    <property type="nucleotide sequence ID" value="NM_124583.4"/>
</dbReference>
<dbReference type="RefSeq" id="NP_851174.1">
    <molecule id="P92966-1"/>
    <property type="nucleotide sequence ID" value="NM_180843.3"/>
</dbReference>
<dbReference type="SMR" id="P92966"/>
<dbReference type="BioGRID" id="20524">
    <property type="interactions" value="16"/>
</dbReference>
<dbReference type="FunCoup" id="P92966">
    <property type="interactions" value="1024"/>
</dbReference>
<dbReference type="IntAct" id="P92966">
    <property type="interactions" value="2"/>
</dbReference>
<dbReference type="STRING" id="3702.P92966"/>
<dbReference type="iPTMnet" id="P92966"/>
<dbReference type="PaxDb" id="3702-AT5G52040.2"/>
<dbReference type="ProteomicsDB" id="226740">
    <molecule id="P92966-1"/>
</dbReference>
<dbReference type="EnsemblPlants" id="AT5G52040.1">
    <molecule id="P92966-1"/>
    <property type="protein sequence ID" value="AT5G52040.1"/>
    <property type="gene ID" value="AT5G52040"/>
</dbReference>
<dbReference type="EnsemblPlants" id="AT5G52040.2">
    <molecule id="P92966-2"/>
    <property type="protein sequence ID" value="AT5G52040.2"/>
    <property type="gene ID" value="AT5G52040"/>
</dbReference>
<dbReference type="EnsemblPlants" id="AT5G52040.3">
    <molecule id="P92966-5"/>
    <property type="protein sequence ID" value="AT5G52040.3"/>
    <property type="gene ID" value="AT5G52040"/>
</dbReference>
<dbReference type="EnsemblPlants" id="AT5G52040.4">
    <molecule id="P92966-4"/>
    <property type="protein sequence ID" value="AT5G52040.4"/>
    <property type="gene ID" value="AT5G52040"/>
</dbReference>
<dbReference type="EnsemblPlants" id="AT5G52040.6">
    <molecule id="P92966-3"/>
    <property type="protein sequence ID" value="AT5G52040.6"/>
    <property type="gene ID" value="AT5G52040"/>
</dbReference>
<dbReference type="GeneID" id="835279"/>
<dbReference type="Gramene" id="AT5G52040.1">
    <molecule id="P92966-1"/>
    <property type="protein sequence ID" value="AT5G52040.1"/>
    <property type="gene ID" value="AT5G52040"/>
</dbReference>
<dbReference type="Gramene" id="AT5G52040.2">
    <molecule id="P92966-2"/>
    <property type="protein sequence ID" value="AT5G52040.2"/>
    <property type="gene ID" value="AT5G52040"/>
</dbReference>
<dbReference type="Gramene" id="AT5G52040.3">
    <molecule id="P92966-5"/>
    <property type="protein sequence ID" value="AT5G52040.3"/>
    <property type="gene ID" value="AT5G52040"/>
</dbReference>
<dbReference type="Gramene" id="AT5G52040.4">
    <molecule id="P92966-4"/>
    <property type="protein sequence ID" value="AT5G52040.4"/>
    <property type="gene ID" value="AT5G52040"/>
</dbReference>
<dbReference type="Gramene" id="AT5G52040.6">
    <molecule id="P92966-3"/>
    <property type="protein sequence ID" value="AT5G52040.6"/>
    <property type="gene ID" value="AT5G52040"/>
</dbReference>
<dbReference type="KEGG" id="ath:AT5G52040"/>
<dbReference type="Araport" id="AT5G52040"/>
<dbReference type="TAIR" id="AT5G52040">
    <property type="gene designation" value="RS41"/>
</dbReference>
<dbReference type="eggNOG" id="KOG0106">
    <property type="taxonomic scope" value="Eukaryota"/>
</dbReference>
<dbReference type="InParanoid" id="P92966"/>
<dbReference type="OMA" id="GHRKERT"/>
<dbReference type="OrthoDB" id="5970at2759"/>
<dbReference type="PhylomeDB" id="P92966"/>
<dbReference type="CD-CODE" id="4299E36E">
    <property type="entry name" value="Nucleolus"/>
</dbReference>
<dbReference type="PRO" id="PR:P92966"/>
<dbReference type="Proteomes" id="UP000006548">
    <property type="component" value="Chromosome 5"/>
</dbReference>
<dbReference type="ExpressionAtlas" id="P92966">
    <property type="expression patterns" value="baseline and differential"/>
</dbReference>
<dbReference type="GO" id="GO:0010445">
    <property type="term" value="C:nuclear dicing body"/>
    <property type="evidence" value="ECO:0000314"/>
    <property type="project" value="TAIR"/>
</dbReference>
<dbReference type="GO" id="GO:0016607">
    <property type="term" value="C:nuclear speck"/>
    <property type="evidence" value="ECO:0007669"/>
    <property type="project" value="UniProtKB-SubCell"/>
</dbReference>
<dbReference type="GO" id="GO:0005681">
    <property type="term" value="C:spliceosomal complex"/>
    <property type="evidence" value="ECO:0000250"/>
    <property type="project" value="TAIR"/>
</dbReference>
<dbReference type="GO" id="GO:0003729">
    <property type="term" value="F:mRNA binding"/>
    <property type="evidence" value="ECO:0000314"/>
    <property type="project" value="TAIR"/>
</dbReference>
<dbReference type="GO" id="GO:0000398">
    <property type="term" value="P:mRNA splicing, via spliceosome"/>
    <property type="evidence" value="ECO:0000250"/>
    <property type="project" value="TAIR"/>
</dbReference>
<dbReference type="GO" id="GO:0031053">
    <property type="term" value="P:primary miRNA processing"/>
    <property type="evidence" value="ECO:0000316"/>
    <property type="project" value="TAIR"/>
</dbReference>
<dbReference type="GO" id="GO:0008380">
    <property type="term" value="P:RNA splicing"/>
    <property type="evidence" value="ECO:0000303"/>
    <property type="project" value="TAIR"/>
</dbReference>
<dbReference type="CDD" id="cd12234">
    <property type="entry name" value="RRM1_AtRSp31_like"/>
    <property type="match status" value="1"/>
</dbReference>
<dbReference type="CDD" id="cd12466">
    <property type="entry name" value="RRM2_AtRSp31_like"/>
    <property type="match status" value="1"/>
</dbReference>
<dbReference type="FunFam" id="3.30.70.330:FF:000294">
    <property type="entry name" value="Serine/arginine-rich splicing factor RS31"/>
    <property type="match status" value="1"/>
</dbReference>
<dbReference type="FunFam" id="3.30.70.330:FF:000299">
    <property type="entry name" value="Serine/arginine-rich splicing factor RS31"/>
    <property type="match status" value="1"/>
</dbReference>
<dbReference type="Gene3D" id="3.30.70.330">
    <property type="match status" value="2"/>
</dbReference>
<dbReference type="InterPro" id="IPR012677">
    <property type="entry name" value="Nucleotide-bd_a/b_plait_sf"/>
</dbReference>
<dbReference type="InterPro" id="IPR035979">
    <property type="entry name" value="RBD_domain_sf"/>
</dbReference>
<dbReference type="InterPro" id="IPR000504">
    <property type="entry name" value="RRM_dom"/>
</dbReference>
<dbReference type="InterPro" id="IPR050907">
    <property type="entry name" value="SRSF"/>
</dbReference>
<dbReference type="PANTHER" id="PTHR23147">
    <property type="entry name" value="SERINE/ARGININE RICH SPLICING FACTOR"/>
    <property type="match status" value="1"/>
</dbReference>
<dbReference type="Pfam" id="PF00076">
    <property type="entry name" value="RRM_1"/>
    <property type="match status" value="2"/>
</dbReference>
<dbReference type="SMART" id="SM00360">
    <property type="entry name" value="RRM"/>
    <property type="match status" value="2"/>
</dbReference>
<dbReference type="SUPFAM" id="SSF54928">
    <property type="entry name" value="RNA-binding domain, RBD"/>
    <property type="match status" value="1"/>
</dbReference>
<dbReference type="PROSITE" id="PS50102">
    <property type="entry name" value="RRM"/>
    <property type="match status" value="2"/>
</dbReference>
<comment type="function">
    <text evidence="8 12">Required for constitutive and alternative pre-mRNA splicing (Probable). Involved in primary miRNA processing and pri-miRNA biogenesis. Binds both intronless and intron-containing pri-miRNAs (PubMed:26227967).</text>
</comment>
<comment type="subunit">
    <text evidence="7 8 10">Component of the spliceosome (Probable). Interacts with RCF3 and CPL1 (PubMed:24146632). Interacts with DRB1/HYL1 and SE (PubMed:26227967).</text>
</comment>
<comment type="interaction">
    <interactant intactId="EBI-4474477">
        <id>P92966</id>
    </interactant>
    <interactant intactId="EBI-927172">
        <id>O81127</id>
        <label>RSZ21</label>
    </interactant>
    <organismsDiffer>false</organismsDiffer>
    <experiments>3</experiments>
</comment>
<comment type="subcellular location">
    <subcellularLocation>
        <location evidence="7 8">Nucleus</location>
    </subcellularLocation>
    <subcellularLocation>
        <location evidence="7 8">Nucleus speckle</location>
    </subcellularLocation>
</comment>
<comment type="alternative products">
    <event type="alternative splicing"/>
    <isoform>
        <id>P92966-1</id>
        <name>1</name>
        <sequence type="displayed"/>
    </isoform>
    <isoform>
        <id>P92966-2</id>
        <name>2</name>
        <sequence type="described" ref="VSP_054983"/>
    </isoform>
    <isoform>
        <id>P92966-3</id>
        <name>3</name>
        <sequence type="described" ref="VSP_054982"/>
    </isoform>
    <isoform>
        <id>P92966-4</id>
        <name>4</name>
        <sequence type="described" ref="VSP_054982 VSP_054983"/>
    </isoform>
    <isoform>
        <id>P92966-5</id>
        <name>5</name>
        <sequence type="described" ref="VSP_054981"/>
    </isoform>
    <text>A number of isoforms are produced. According to EST sequences.</text>
</comment>
<comment type="tissue specificity">
    <text>Leaves, stem, roots and flowers.</text>
</comment>
<comment type="disruption phenotype">
    <text evidence="7">Mutant seedlings show increased sensitivity to salt stress and abscisic acid (ABA).</text>
</comment>
<comment type="miscellaneous">
    <text evidence="11">The splicing pattern of the pre-mRNA is regulated in a tissue-specific manner and by development, and changes in response to various types of abiotic stresses.</text>
</comment>
<comment type="similarity">
    <text evidence="10">Belongs to the splicing factor SR family. RS subfamily.</text>
</comment>